<keyword id="KW-0240">DNA-directed RNA polymerase</keyword>
<keyword id="KW-0460">Magnesium</keyword>
<keyword id="KW-0479">Metal-binding</keyword>
<keyword id="KW-0548">Nucleotidyltransferase</keyword>
<keyword id="KW-1185">Reference proteome</keyword>
<keyword id="KW-0804">Transcription</keyword>
<keyword id="KW-0808">Transferase</keyword>
<keyword id="KW-0862">Zinc</keyword>
<protein>
    <recommendedName>
        <fullName evidence="1">DNA-directed RNA polymerase subunit beta'</fullName>
        <shortName evidence="1">RNAP subunit beta'</shortName>
        <ecNumber evidence="1">2.7.7.6</ecNumber>
    </recommendedName>
    <alternativeName>
        <fullName evidence="1">RNA polymerase subunit beta'</fullName>
    </alternativeName>
    <alternativeName>
        <fullName evidence="1">Transcriptase subunit beta'</fullName>
    </alternativeName>
</protein>
<gene>
    <name evidence="1" type="primary">rpoC</name>
    <name type="ordered locus">DP1118</name>
</gene>
<reference key="1">
    <citation type="journal article" date="2004" name="Environ. Microbiol.">
        <title>The genome of Desulfotalea psychrophila, a sulfate-reducing bacterium from permanently cold Arctic sediments.</title>
        <authorList>
            <person name="Rabus R."/>
            <person name="Ruepp A."/>
            <person name="Frickey T."/>
            <person name="Rattei T."/>
            <person name="Fartmann B."/>
            <person name="Stark M."/>
            <person name="Bauer M."/>
            <person name="Zibat A."/>
            <person name="Lombardot T."/>
            <person name="Becker I."/>
            <person name="Amann J."/>
            <person name="Gellner K."/>
            <person name="Teeling H."/>
            <person name="Leuschner W.D."/>
            <person name="Gloeckner F.-O."/>
            <person name="Lupas A.N."/>
            <person name="Amann R."/>
            <person name="Klenk H.-P."/>
        </authorList>
    </citation>
    <scope>NUCLEOTIDE SEQUENCE [LARGE SCALE GENOMIC DNA]</scope>
    <source>
        <strain>DSM 12343 / LSv54</strain>
    </source>
</reference>
<proteinExistence type="inferred from homology"/>
<name>RPOC_DESPS</name>
<comment type="function">
    <text evidence="1">DNA-dependent RNA polymerase catalyzes the transcription of DNA into RNA using the four ribonucleoside triphosphates as substrates.</text>
</comment>
<comment type="catalytic activity">
    <reaction evidence="1">
        <text>RNA(n) + a ribonucleoside 5'-triphosphate = RNA(n+1) + diphosphate</text>
        <dbReference type="Rhea" id="RHEA:21248"/>
        <dbReference type="Rhea" id="RHEA-COMP:14527"/>
        <dbReference type="Rhea" id="RHEA-COMP:17342"/>
        <dbReference type="ChEBI" id="CHEBI:33019"/>
        <dbReference type="ChEBI" id="CHEBI:61557"/>
        <dbReference type="ChEBI" id="CHEBI:140395"/>
        <dbReference type="EC" id="2.7.7.6"/>
    </reaction>
</comment>
<comment type="cofactor">
    <cofactor evidence="1">
        <name>Mg(2+)</name>
        <dbReference type="ChEBI" id="CHEBI:18420"/>
    </cofactor>
    <text evidence="1">Binds 1 Mg(2+) ion per subunit.</text>
</comment>
<comment type="cofactor">
    <cofactor evidence="1">
        <name>Zn(2+)</name>
        <dbReference type="ChEBI" id="CHEBI:29105"/>
    </cofactor>
    <text evidence="1">Binds 2 Zn(2+) ions per subunit.</text>
</comment>
<comment type="subunit">
    <text evidence="1">The RNAP catalytic core consists of 2 alpha, 1 beta, 1 beta' and 1 omega subunit. When a sigma factor is associated with the core the holoenzyme is formed, which can initiate transcription.</text>
</comment>
<comment type="similarity">
    <text evidence="1">Belongs to the RNA polymerase beta' chain family.</text>
</comment>
<evidence type="ECO:0000255" key="1">
    <source>
        <dbReference type="HAMAP-Rule" id="MF_01322"/>
    </source>
</evidence>
<sequence>MEELFNFFQKPKGPVKFNKVKISLASPEQIIDWSHGEVKKPETINYRTFKPERDGLFCAKVFGPVKDFECNCGKYKRMKHRGVVCEKCGVEVIQSKVRRERLGHISLAAPVAHIWFLKSLPSKIGAVLDMTLKQLEKVLYFENYAVTQSEVEELPLGTLLTEEKYRQALSEYPAQFKVGIGAEAIRELLAAQDLIGLSRVLREEMASTSSQTKRQKLGKRLFVIEAFRDSGNKPEWMILQVIPVLPPDLRPLVPLEGGRFATSDLNDLYRRVINRNNRLKRLLELDAPDIIIRNEKRMLQESVDVLFDNGRRGRVITGANKRPLKSLSDMLKGKQGRFRQNLLGKRVDYSGRSVIVVGPHLRLHQCGIPKKMALELFKPFIYNRLERKGLVTTIKSARKMVEKGAKEVWDVLEEVVTEYPVILNRAPTLHRLGMQAFEAVLIEGKAIRLHPLVCMAFNADFDGDQMAVHVPLSVEAQVEARVLMMSTNNILSPANGEPVIIPSQDIVLGLYYMTRERINVKGEGRVFSSVDEAIISYDYKETDLQAKVKVRRPEGIVDTTMGRIILGELVPKSVPFVEVNKVMSKKALAALIDYTYRHAGTKDTVILADRLKDTGYEYATRAGISICIDDMKIPATKVGLVKKGEDEVLDVEQQYSDGLITAGEKYNKVIDIWSKVSEDVANEMMDEIKTETFEDKDGNLVEGPSFNSIFVMADSGARGSRDQIRQLAGMRGLMAKPSGAIIETPIKANFREGLDVLEYFISTHGARKGLADTALKTANSGYLTRRLVDVAQEATIVEADCQTLDGIVAEPLLDGGEVLVPLGDRILGRVALEDVVDPFTGEVLVVAGEQMEEDKVAILEEAGIDRVMIRSVLTCRSKRGVCAACYGRDLGRGHLINQGEAVGVIAAQSIGEPGTQLTMRTFHIGGTASRSVEQAEIRTHRGGKVAFNNLHYVENSSGVKIVMNRNAEIFVKDEFGRDREKFKVNYGAQVLVKEGEDIERDTVLADWDAYTIPIVAEVGGIIRYGDIFNGITMQEKVDPVTGKSSMVIVHSAGGVTLNPRISVKNDRGKTLKLPDSEGFARYSLPVGSLISVEEGAEIKAGTIVGKIPRETSKTKDITGGLPRVAELFEVRKPKDPAIIARIDGKVSFGKELKGKRRVVVTPEYGEQQEYLVPKAKHIIVHEGDYVQAGEPLMEGTIVPNDILSVLGVKALAKFLVDEIQEVYRLQGVKINDKHIEVIVRQMLKRVHITRANDSKFMIGENVEWWKFEEERDRLLAEGKKPGAAEPLLLGVTKASLSTESFISAASFQETTKVLTNAAMSGRVDELLGLKENVIMGRLISAGTGINRVD</sequence>
<accession>Q6AP77</accession>
<organism>
    <name type="scientific">Desulfotalea psychrophila (strain LSv54 / DSM 12343)</name>
    <dbReference type="NCBI Taxonomy" id="177439"/>
    <lineage>
        <taxon>Bacteria</taxon>
        <taxon>Pseudomonadati</taxon>
        <taxon>Thermodesulfobacteriota</taxon>
        <taxon>Desulfobulbia</taxon>
        <taxon>Desulfobulbales</taxon>
        <taxon>Desulfocapsaceae</taxon>
        <taxon>Desulfotalea</taxon>
    </lineage>
</organism>
<dbReference type="EC" id="2.7.7.6" evidence="1"/>
<dbReference type="EMBL" id="CR522870">
    <property type="protein sequence ID" value="CAG35847.1"/>
    <property type="molecule type" value="Genomic_DNA"/>
</dbReference>
<dbReference type="RefSeq" id="WP_011188361.1">
    <property type="nucleotide sequence ID" value="NC_006138.1"/>
</dbReference>
<dbReference type="SMR" id="Q6AP77"/>
<dbReference type="STRING" id="177439.DP1118"/>
<dbReference type="KEGG" id="dps:DP1118"/>
<dbReference type="eggNOG" id="COG0086">
    <property type="taxonomic scope" value="Bacteria"/>
</dbReference>
<dbReference type="HOGENOM" id="CLU_000524_3_1_7"/>
<dbReference type="OrthoDB" id="9815296at2"/>
<dbReference type="Proteomes" id="UP000000602">
    <property type="component" value="Chromosome"/>
</dbReference>
<dbReference type="GO" id="GO:0000428">
    <property type="term" value="C:DNA-directed RNA polymerase complex"/>
    <property type="evidence" value="ECO:0007669"/>
    <property type="project" value="UniProtKB-KW"/>
</dbReference>
<dbReference type="GO" id="GO:0003677">
    <property type="term" value="F:DNA binding"/>
    <property type="evidence" value="ECO:0007669"/>
    <property type="project" value="UniProtKB-UniRule"/>
</dbReference>
<dbReference type="GO" id="GO:0003899">
    <property type="term" value="F:DNA-directed RNA polymerase activity"/>
    <property type="evidence" value="ECO:0007669"/>
    <property type="project" value="UniProtKB-UniRule"/>
</dbReference>
<dbReference type="GO" id="GO:0000287">
    <property type="term" value="F:magnesium ion binding"/>
    <property type="evidence" value="ECO:0007669"/>
    <property type="project" value="UniProtKB-UniRule"/>
</dbReference>
<dbReference type="GO" id="GO:0008270">
    <property type="term" value="F:zinc ion binding"/>
    <property type="evidence" value="ECO:0007669"/>
    <property type="project" value="UniProtKB-UniRule"/>
</dbReference>
<dbReference type="GO" id="GO:0006351">
    <property type="term" value="P:DNA-templated transcription"/>
    <property type="evidence" value="ECO:0007669"/>
    <property type="project" value="UniProtKB-UniRule"/>
</dbReference>
<dbReference type="CDD" id="cd02655">
    <property type="entry name" value="RNAP_beta'_C"/>
    <property type="match status" value="1"/>
</dbReference>
<dbReference type="CDD" id="cd01609">
    <property type="entry name" value="RNAP_beta'_N"/>
    <property type="match status" value="1"/>
</dbReference>
<dbReference type="FunFam" id="1.10.132.30:FF:000003">
    <property type="entry name" value="DNA-directed RNA polymerase subunit beta"/>
    <property type="match status" value="1"/>
</dbReference>
<dbReference type="Gene3D" id="1.10.132.30">
    <property type="match status" value="1"/>
</dbReference>
<dbReference type="Gene3D" id="1.10.150.390">
    <property type="match status" value="1"/>
</dbReference>
<dbReference type="Gene3D" id="1.10.1790.20">
    <property type="match status" value="1"/>
</dbReference>
<dbReference type="Gene3D" id="1.10.40.90">
    <property type="match status" value="1"/>
</dbReference>
<dbReference type="Gene3D" id="2.40.40.20">
    <property type="match status" value="1"/>
</dbReference>
<dbReference type="Gene3D" id="2.40.50.100">
    <property type="match status" value="3"/>
</dbReference>
<dbReference type="Gene3D" id="4.10.860.120">
    <property type="entry name" value="RNA polymerase II, clamp domain"/>
    <property type="match status" value="1"/>
</dbReference>
<dbReference type="Gene3D" id="1.10.274.100">
    <property type="entry name" value="RNA polymerase Rpb1, domain 3"/>
    <property type="match status" value="2"/>
</dbReference>
<dbReference type="HAMAP" id="MF_01322">
    <property type="entry name" value="RNApol_bact_RpoC"/>
    <property type="match status" value="1"/>
</dbReference>
<dbReference type="InterPro" id="IPR045867">
    <property type="entry name" value="DNA-dir_RpoC_beta_prime"/>
</dbReference>
<dbReference type="InterPro" id="IPR012754">
    <property type="entry name" value="DNA-dir_RpoC_beta_prime_bact"/>
</dbReference>
<dbReference type="InterPro" id="IPR000722">
    <property type="entry name" value="RNA_pol_asu"/>
</dbReference>
<dbReference type="InterPro" id="IPR006592">
    <property type="entry name" value="RNA_pol_N"/>
</dbReference>
<dbReference type="InterPro" id="IPR007080">
    <property type="entry name" value="RNA_pol_Rpb1_1"/>
</dbReference>
<dbReference type="InterPro" id="IPR007066">
    <property type="entry name" value="RNA_pol_Rpb1_3"/>
</dbReference>
<dbReference type="InterPro" id="IPR042102">
    <property type="entry name" value="RNA_pol_Rpb1_3_sf"/>
</dbReference>
<dbReference type="InterPro" id="IPR007083">
    <property type="entry name" value="RNA_pol_Rpb1_4"/>
</dbReference>
<dbReference type="InterPro" id="IPR007081">
    <property type="entry name" value="RNA_pol_Rpb1_5"/>
</dbReference>
<dbReference type="InterPro" id="IPR044893">
    <property type="entry name" value="RNA_pol_Rpb1_clamp_domain"/>
</dbReference>
<dbReference type="InterPro" id="IPR038120">
    <property type="entry name" value="Rpb1_funnel_sf"/>
</dbReference>
<dbReference type="NCBIfam" id="TIGR02386">
    <property type="entry name" value="rpoC_TIGR"/>
    <property type="match status" value="1"/>
</dbReference>
<dbReference type="PANTHER" id="PTHR19376">
    <property type="entry name" value="DNA-DIRECTED RNA POLYMERASE"/>
    <property type="match status" value="1"/>
</dbReference>
<dbReference type="PANTHER" id="PTHR19376:SF54">
    <property type="entry name" value="DNA-DIRECTED RNA POLYMERASE SUBUNIT BETA"/>
    <property type="match status" value="1"/>
</dbReference>
<dbReference type="Pfam" id="PF04997">
    <property type="entry name" value="RNA_pol_Rpb1_1"/>
    <property type="match status" value="1"/>
</dbReference>
<dbReference type="Pfam" id="PF00623">
    <property type="entry name" value="RNA_pol_Rpb1_2"/>
    <property type="match status" value="2"/>
</dbReference>
<dbReference type="Pfam" id="PF04983">
    <property type="entry name" value="RNA_pol_Rpb1_3"/>
    <property type="match status" value="1"/>
</dbReference>
<dbReference type="Pfam" id="PF05000">
    <property type="entry name" value="RNA_pol_Rpb1_4"/>
    <property type="match status" value="1"/>
</dbReference>
<dbReference type="Pfam" id="PF04998">
    <property type="entry name" value="RNA_pol_Rpb1_5"/>
    <property type="match status" value="1"/>
</dbReference>
<dbReference type="SMART" id="SM00663">
    <property type="entry name" value="RPOLA_N"/>
    <property type="match status" value="1"/>
</dbReference>
<dbReference type="SUPFAM" id="SSF64484">
    <property type="entry name" value="beta and beta-prime subunits of DNA dependent RNA-polymerase"/>
    <property type="match status" value="1"/>
</dbReference>
<feature type="chain" id="PRO_0000067740" description="DNA-directed RNA polymerase subunit beta'">
    <location>
        <begin position="1"/>
        <end position="1349"/>
    </location>
</feature>
<feature type="binding site" evidence="1">
    <location>
        <position position="70"/>
    </location>
    <ligand>
        <name>Zn(2+)</name>
        <dbReference type="ChEBI" id="CHEBI:29105"/>
        <label>1</label>
    </ligand>
</feature>
<feature type="binding site" evidence="1">
    <location>
        <position position="72"/>
    </location>
    <ligand>
        <name>Zn(2+)</name>
        <dbReference type="ChEBI" id="CHEBI:29105"/>
        <label>1</label>
    </ligand>
</feature>
<feature type="binding site" evidence="1">
    <location>
        <position position="85"/>
    </location>
    <ligand>
        <name>Zn(2+)</name>
        <dbReference type="ChEBI" id="CHEBI:29105"/>
        <label>1</label>
    </ligand>
</feature>
<feature type="binding site" evidence="1">
    <location>
        <position position="88"/>
    </location>
    <ligand>
        <name>Zn(2+)</name>
        <dbReference type="ChEBI" id="CHEBI:29105"/>
        <label>1</label>
    </ligand>
</feature>
<feature type="binding site" evidence="1">
    <location>
        <position position="460"/>
    </location>
    <ligand>
        <name>Mg(2+)</name>
        <dbReference type="ChEBI" id="CHEBI:18420"/>
    </ligand>
</feature>
<feature type="binding site" evidence="1">
    <location>
        <position position="462"/>
    </location>
    <ligand>
        <name>Mg(2+)</name>
        <dbReference type="ChEBI" id="CHEBI:18420"/>
    </ligand>
</feature>
<feature type="binding site" evidence="1">
    <location>
        <position position="464"/>
    </location>
    <ligand>
        <name>Mg(2+)</name>
        <dbReference type="ChEBI" id="CHEBI:18420"/>
    </ligand>
</feature>
<feature type="binding site" evidence="1">
    <location>
        <position position="801"/>
    </location>
    <ligand>
        <name>Zn(2+)</name>
        <dbReference type="ChEBI" id="CHEBI:29105"/>
        <label>2</label>
    </ligand>
</feature>
<feature type="binding site" evidence="1">
    <location>
        <position position="875"/>
    </location>
    <ligand>
        <name>Zn(2+)</name>
        <dbReference type="ChEBI" id="CHEBI:29105"/>
        <label>2</label>
    </ligand>
</feature>
<feature type="binding site" evidence="1">
    <location>
        <position position="882"/>
    </location>
    <ligand>
        <name>Zn(2+)</name>
        <dbReference type="ChEBI" id="CHEBI:29105"/>
        <label>2</label>
    </ligand>
</feature>
<feature type="binding site" evidence="1">
    <location>
        <position position="885"/>
    </location>
    <ligand>
        <name>Zn(2+)</name>
        <dbReference type="ChEBI" id="CHEBI:29105"/>
        <label>2</label>
    </ligand>
</feature>